<feature type="chain" id="PRO_0000258450" description="Large ribosomal subunit protein bL9">
    <location>
        <begin position="1"/>
        <end position="148"/>
    </location>
</feature>
<proteinExistence type="inferred from homology"/>
<sequence length="148" mass="16423">MKVILLQDVKKLGKKGDVINASDGYARNFLFPKKLAQEATDNNLHILNNKKENERRQKLAELEAAQALAADLKDKVIKIDGKAGDNGKLFGAITSKDVAGLIKKQFNVEVDKKKIVMDTIKIAGTYNIEVKLYPEVSTKMKVMVVPVQ</sequence>
<gene>
    <name evidence="1" type="primary">rplI</name>
    <name type="ordered locus">CPR_2650</name>
</gene>
<comment type="function">
    <text evidence="1">Binds to the 23S rRNA.</text>
</comment>
<comment type="similarity">
    <text evidence="1">Belongs to the bacterial ribosomal protein bL9 family.</text>
</comment>
<organism>
    <name type="scientific">Clostridium perfringens (strain SM101 / Type A)</name>
    <dbReference type="NCBI Taxonomy" id="289380"/>
    <lineage>
        <taxon>Bacteria</taxon>
        <taxon>Bacillati</taxon>
        <taxon>Bacillota</taxon>
        <taxon>Clostridia</taxon>
        <taxon>Eubacteriales</taxon>
        <taxon>Clostridiaceae</taxon>
        <taxon>Clostridium</taxon>
    </lineage>
</organism>
<evidence type="ECO:0000255" key="1">
    <source>
        <dbReference type="HAMAP-Rule" id="MF_00503"/>
    </source>
</evidence>
<evidence type="ECO:0000305" key="2"/>
<keyword id="KW-0687">Ribonucleoprotein</keyword>
<keyword id="KW-0689">Ribosomal protein</keyword>
<keyword id="KW-0694">RNA-binding</keyword>
<keyword id="KW-0699">rRNA-binding</keyword>
<dbReference type="EMBL" id="CP000312">
    <property type="protein sequence ID" value="ABG87576.1"/>
    <property type="molecule type" value="Genomic_DNA"/>
</dbReference>
<dbReference type="RefSeq" id="WP_003451030.1">
    <property type="nucleotide sequence ID" value="NZ_CAXVKH010000018.1"/>
</dbReference>
<dbReference type="SMR" id="Q0SPS2"/>
<dbReference type="GeneID" id="93000749"/>
<dbReference type="KEGG" id="cpr:CPR_2650"/>
<dbReference type="Proteomes" id="UP000001824">
    <property type="component" value="Chromosome"/>
</dbReference>
<dbReference type="GO" id="GO:1990904">
    <property type="term" value="C:ribonucleoprotein complex"/>
    <property type="evidence" value="ECO:0007669"/>
    <property type="project" value="UniProtKB-KW"/>
</dbReference>
<dbReference type="GO" id="GO:0005840">
    <property type="term" value="C:ribosome"/>
    <property type="evidence" value="ECO:0007669"/>
    <property type="project" value="UniProtKB-KW"/>
</dbReference>
<dbReference type="GO" id="GO:0019843">
    <property type="term" value="F:rRNA binding"/>
    <property type="evidence" value="ECO:0007669"/>
    <property type="project" value="UniProtKB-UniRule"/>
</dbReference>
<dbReference type="GO" id="GO:0003735">
    <property type="term" value="F:structural constituent of ribosome"/>
    <property type="evidence" value="ECO:0007669"/>
    <property type="project" value="InterPro"/>
</dbReference>
<dbReference type="GO" id="GO:0006412">
    <property type="term" value="P:translation"/>
    <property type="evidence" value="ECO:0007669"/>
    <property type="project" value="UniProtKB-UniRule"/>
</dbReference>
<dbReference type="FunFam" id="3.40.5.10:FF:000002">
    <property type="entry name" value="50S ribosomal protein L9"/>
    <property type="match status" value="1"/>
</dbReference>
<dbReference type="Gene3D" id="3.10.430.100">
    <property type="entry name" value="Ribosomal protein L9, C-terminal domain"/>
    <property type="match status" value="1"/>
</dbReference>
<dbReference type="Gene3D" id="3.40.5.10">
    <property type="entry name" value="Ribosomal protein L9, N-terminal domain"/>
    <property type="match status" value="1"/>
</dbReference>
<dbReference type="HAMAP" id="MF_00503">
    <property type="entry name" value="Ribosomal_bL9"/>
    <property type="match status" value="1"/>
</dbReference>
<dbReference type="InterPro" id="IPR000244">
    <property type="entry name" value="Ribosomal_bL9"/>
</dbReference>
<dbReference type="InterPro" id="IPR009027">
    <property type="entry name" value="Ribosomal_bL9/RNase_H1_N"/>
</dbReference>
<dbReference type="InterPro" id="IPR020594">
    <property type="entry name" value="Ribosomal_bL9_bac/chp"/>
</dbReference>
<dbReference type="InterPro" id="IPR020069">
    <property type="entry name" value="Ribosomal_bL9_C"/>
</dbReference>
<dbReference type="InterPro" id="IPR036791">
    <property type="entry name" value="Ribosomal_bL9_C_sf"/>
</dbReference>
<dbReference type="InterPro" id="IPR020070">
    <property type="entry name" value="Ribosomal_bL9_N"/>
</dbReference>
<dbReference type="InterPro" id="IPR036935">
    <property type="entry name" value="Ribosomal_bL9_N_sf"/>
</dbReference>
<dbReference type="NCBIfam" id="TIGR00158">
    <property type="entry name" value="L9"/>
    <property type="match status" value="1"/>
</dbReference>
<dbReference type="PANTHER" id="PTHR21368">
    <property type="entry name" value="50S RIBOSOMAL PROTEIN L9"/>
    <property type="match status" value="1"/>
</dbReference>
<dbReference type="Pfam" id="PF03948">
    <property type="entry name" value="Ribosomal_L9_C"/>
    <property type="match status" value="1"/>
</dbReference>
<dbReference type="Pfam" id="PF01281">
    <property type="entry name" value="Ribosomal_L9_N"/>
    <property type="match status" value="1"/>
</dbReference>
<dbReference type="SUPFAM" id="SSF55658">
    <property type="entry name" value="L9 N-domain-like"/>
    <property type="match status" value="1"/>
</dbReference>
<dbReference type="SUPFAM" id="SSF55653">
    <property type="entry name" value="Ribosomal protein L9 C-domain"/>
    <property type="match status" value="1"/>
</dbReference>
<dbReference type="PROSITE" id="PS00651">
    <property type="entry name" value="RIBOSOMAL_L9"/>
    <property type="match status" value="1"/>
</dbReference>
<reference key="1">
    <citation type="journal article" date="2006" name="Genome Res.">
        <title>Skewed genomic variability in strains of the toxigenic bacterial pathogen, Clostridium perfringens.</title>
        <authorList>
            <person name="Myers G.S.A."/>
            <person name="Rasko D.A."/>
            <person name="Cheung J.K."/>
            <person name="Ravel J."/>
            <person name="Seshadri R."/>
            <person name="DeBoy R.T."/>
            <person name="Ren Q."/>
            <person name="Varga J."/>
            <person name="Awad M.M."/>
            <person name="Brinkac L.M."/>
            <person name="Daugherty S.C."/>
            <person name="Haft D.H."/>
            <person name="Dodson R.J."/>
            <person name="Madupu R."/>
            <person name="Nelson W.C."/>
            <person name="Rosovitz M.J."/>
            <person name="Sullivan S.A."/>
            <person name="Khouri H."/>
            <person name="Dimitrov G.I."/>
            <person name="Watkins K.L."/>
            <person name="Mulligan S."/>
            <person name="Benton J."/>
            <person name="Radune D."/>
            <person name="Fisher D.J."/>
            <person name="Atkins H.S."/>
            <person name="Hiscox T."/>
            <person name="Jost B.H."/>
            <person name="Billington S.J."/>
            <person name="Songer J.G."/>
            <person name="McClane B.A."/>
            <person name="Titball R.W."/>
            <person name="Rood J.I."/>
            <person name="Melville S.B."/>
            <person name="Paulsen I.T."/>
        </authorList>
    </citation>
    <scope>NUCLEOTIDE SEQUENCE [LARGE SCALE GENOMIC DNA]</scope>
    <source>
        <strain>SM101 / Type A</strain>
    </source>
</reference>
<accession>Q0SPS2</accession>
<name>RL9_CLOPS</name>
<protein>
    <recommendedName>
        <fullName evidence="1">Large ribosomal subunit protein bL9</fullName>
    </recommendedName>
    <alternativeName>
        <fullName evidence="2">50S ribosomal protein L9</fullName>
    </alternativeName>
</protein>